<evidence type="ECO:0000255" key="1">
    <source>
        <dbReference type="HAMAP-Rule" id="MF_00671"/>
    </source>
</evidence>
<dbReference type="EMBL" id="CP000699">
    <property type="protein sequence ID" value="ABQ68492.1"/>
    <property type="molecule type" value="Genomic_DNA"/>
</dbReference>
<dbReference type="SMR" id="A5V876"/>
<dbReference type="STRING" id="392499.Swit_2133"/>
<dbReference type="PaxDb" id="392499-Swit_2133"/>
<dbReference type="KEGG" id="swi:Swit_2133"/>
<dbReference type="eggNOG" id="COG0823">
    <property type="taxonomic scope" value="Bacteria"/>
</dbReference>
<dbReference type="HOGENOM" id="CLU_047123_0_0_5"/>
<dbReference type="OrthoDB" id="9802240at2"/>
<dbReference type="Proteomes" id="UP000001989">
    <property type="component" value="Chromosome"/>
</dbReference>
<dbReference type="GO" id="GO:0042597">
    <property type="term" value="C:periplasmic space"/>
    <property type="evidence" value="ECO:0007669"/>
    <property type="project" value="UniProtKB-SubCell"/>
</dbReference>
<dbReference type="GO" id="GO:0051301">
    <property type="term" value="P:cell division"/>
    <property type="evidence" value="ECO:0007669"/>
    <property type="project" value="UniProtKB-UniRule"/>
</dbReference>
<dbReference type="GO" id="GO:0017038">
    <property type="term" value="P:protein import"/>
    <property type="evidence" value="ECO:0007669"/>
    <property type="project" value="InterPro"/>
</dbReference>
<dbReference type="Gene3D" id="2.120.10.30">
    <property type="entry name" value="TolB, C-terminal domain"/>
    <property type="match status" value="1"/>
</dbReference>
<dbReference type="Gene3D" id="3.40.50.10070">
    <property type="entry name" value="TolB, N-terminal domain"/>
    <property type="match status" value="1"/>
</dbReference>
<dbReference type="HAMAP" id="MF_00671">
    <property type="entry name" value="TolB"/>
    <property type="match status" value="1"/>
</dbReference>
<dbReference type="InterPro" id="IPR011042">
    <property type="entry name" value="6-blade_b-propeller_TolB-like"/>
</dbReference>
<dbReference type="InterPro" id="IPR011659">
    <property type="entry name" value="PD40"/>
</dbReference>
<dbReference type="InterPro" id="IPR014167">
    <property type="entry name" value="Tol-Pal_TolB"/>
</dbReference>
<dbReference type="InterPro" id="IPR007195">
    <property type="entry name" value="TolB_N"/>
</dbReference>
<dbReference type="NCBIfam" id="TIGR02800">
    <property type="entry name" value="propeller_TolB"/>
    <property type="match status" value="1"/>
</dbReference>
<dbReference type="PANTHER" id="PTHR36842:SF1">
    <property type="entry name" value="PROTEIN TOLB"/>
    <property type="match status" value="1"/>
</dbReference>
<dbReference type="PANTHER" id="PTHR36842">
    <property type="entry name" value="PROTEIN TOLB HOMOLOG"/>
    <property type="match status" value="1"/>
</dbReference>
<dbReference type="Pfam" id="PF07676">
    <property type="entry name" value="PD40"/>
    <property type="match status" value="3"/>
</dbReference>
<dbReference type="Pfam" id="PF04052">
    <property type="entry name" value="TolB_N"/>
    <property type="match status" value="1"/>
</dbReference>
<dbReference type="SUPFAM" id="SSF52964">
    <property type="entry name" value="TolB, N-terminal domain"/>
    <property type="match status" value="1"/>
</dbReference>
<dbReference type="SUPFAM" id="SSF69304">
    <property type="entry name" value="Tricorn protease N-terminal domain"/>
    <property type="match status" value="1"/>
</dbReference>
<gene>
    <name evidence="1" type="primary">tolB</name>
    <name type="ordered locus">Swit_2133</name>
</gene>
<accession>A5V876</accession>
<comment type="function">
    <text evidence="1">Part of the Tol-Pal system, which plays a role in outer membrane invagination during cell division and is important for maintaining outer membrane integrity.</text>
</comment>
<comment type="subunit">
    <text evidence="1">The Tol-Pal system is composed of five core proteins: the inner membrane proteins TolA, TolQ and TolR, the periplasmic protein TolB and the outer membrane protein Pal. They form a network linking the inner and outer membranes and the peptidoglycan layer.</text>
</comment>
<comment type="subcellular location">
    <subcellularLocation>
        <location evidence="1">Periplasm</location>
    </subcellularLocation>
</comment>
<comment type="similarity">
    <text evidence="1">Belongs to the TolB family.</text>
</comment>
<protein>
    <recommendedName>
        <fullName evidence="1">Tol-Pal system protein TolB</fullName>
    </recommendedName>
</protein>
<name>TOLB_RHIWR</name>
<keyword id="KW-0131">Cell cycle</keyword>
<keyword id="KW-0132">Cell division</keyword>
<keyword id="KW-0574">Periplasm</keyword>
<keyword id="KW-1185">Reference proteome</keyword>
<keyword id="KW-0732">Signal</keyword>
<reference key="1">
    <citation type="journal article" date="2010" name="J. Bacteriol.">
        <title>Genome sequence of the dioxin-mineralizing bacterium Sphingomonas wittichii RW1.</title>
        <authorList>
            <person name="Miller T.R."/>
            <person name="Delcher A.L."/>
            <person name="Salzberg S.L."/>
            <person name="Saunders E."/>
            <person name="Detter J.C."/>
            <person name="Halden R.U."/>
        </authorList>
    </citation>
    <scope>NUCLEOTIDE SEQUENCE [LARGE SCALE GENOMIC DNA]</scope>
    <source>
        <strain>DSM 6014 / CCUG 31198 / JCM 15750 / NBRC 105917 / EY 4224 / RW1</strain>
    </source>
</reference>
<sequence length="439" mass="47057">MRFRLALSLLSLALFAAPAAAQLEVDITGGIAQPMPIAIPGMPTPAVANTPAGDTAALGQRVADVVTNDLKNSGLFSPLPKSALQTVTHPQVTAPDYMFWTQSGAQALIQGFVQANGDGSLTVGCYLYDVLARTELTRQGFVVQPAQWRRAAHKCADLVYTRLTGEGPYFDSRVVYVSETGPKTNRIKRLAIMDQDGANHRFLTNGQTIVLTPRFAPNQQTITYMSYTNNRARVYVYDIGSGSQRLVVDQPNMTFAPRFSPDGRTIVFSMAVGGNTDIYRVSAGGGTPQRLTTSPGIDTGASYSPDGSKIVFESDRSGTQQLYVMNADGSNQNRISFGSGRYGSAAWSPRGDLIAFTKIGGGFNVGIMNIDGSGEKILTNGWQDEGPSWSPNGRVIMFFRTAQGSGKADLWSVDLTGVNERPVPTPLDGSDPAWGPLLP</sequence>
<organism>
    <name type="scientific">Rhizorhabdus wittichii (strain DSM 6014 / CCUG 31198 / JCM 15750 / NBRC 105917 / EY 4224 / RW1)</name>
    <name type="common">Sphingomonas wittichii</name>
    <dbReference type="NCBI Taxonomy" id="392499"/>
    <lineage>
        <taxon>Bacteria</taxon>
        <taxon>Pseudomonadati</taxon>
        <taxon>Pseudomonadota</taxon>
        <taxon>Alphaproteobacteria</taxon>
        <taxon>Sphingomonadales</taxon>
        <taxon>Sphingomonadaceae</taxon>
        <taxon>Rhizorhabdus</taxon>
    </lineage>
</organism>
<proteinExistence type="inferred from homology"/>
<feature type="signal peptide" evidence="1">
    <location>
        <begin position="1"/>
        <end position="21"/>
    </location>
</feature>
<feature type="chain" id="PRO_5000250764" description="Tol-Pal system protein TolB" evidence="1">
    <location>
        <begin position="22"/>
        <end position="439"/>
    </location>
</feature>